<keyword id="KW-0968">Cytoplasmic vesicle</keyword>
<keyword id="KW-1015">Disulfide bond</keyword>
<keyword id="KW-0278">Fertilization</keyword>
<keyword id="KW-0325">Glycoprotein</keyword>
<keyword id="KW-0472">Membrane</keyword>
<keyword id="KW-1185">Reference proteome</keyword>
<keyword id="KW-0732">Signal</keyword>
<keyword id="KW-0812">Transmembrane</keyword>
<keyword id="KW-1133">Transmembrane helix</keyword>
<sequence>MWVLALGGAFLAVAKACIFCRLQDHALANRLAQLNNQTKPKWKWKEWASPDFSAFALDEVSMKQVTEKTHRVLRVIEKKGSTSLIPLYWQWLQKTRIPQYTREALCAPVCRGSTILYNCSTCEGKEESCWPQKHCYPDSHDLWDARILLLCIFGIVLLSGVVSLQVEYLNLQAKDL</sequence>
<evidence type="ECO:0000250" key="1">
    <source>
        <dbReference type="UniProtKB" id="Q3KNT9"/>
    </source>
</evidence>
<evidence type="ECO:0000255" key="2"/>
<evidence type="ECO:0000269" key="3">
    <source>
    </source>
</evidence>
<evidence type="ECO:0000269" key="4">
    <source>
    </source>
</evidence>
<evidence type="ECO:0000269" key="5">
    <source>
    </source>
</evidence>
<evidence type="ECO:0000305" key="6"/>
<evidence type="ECO:0000312" key="7">
    <source>
        <dbReference type="MGI" id="MGI:3779488"/>
    </source>
</evidence>
<proteinExistence type="evidence at protein level"/>
<reference key="1">
    <citation type="journal article" date="2009" name="PLoS Biol.">
        <title>Lineage-specific biology revealed by a finished genome assembly of the mouse.</title>
        <authorList>
            <person name="Church D.M."/>
            <person name="Goodstadt L."/>
            <person name="Hillier L.W."/>
            <person name="Zody M.C."/>
            <person name="Goldstein S."/>
            <person name="She X."/>
            <person name="Bult C.J."/>
            <person name="Agarwala R."/>
            <person name="Cherry J.L."/>
            <person name="DiCuccio M."/>
            <person name="Hlavina W."/>
            <person name="Kapustin Y."/>
            <person name="Meric P."/>
            <person name="Maglott D."/>
            <person name="Birtle Z."/>
            <person name="Marques A.C."/>
            <person name="Graves T."/>
            <person name="Zhou S."/>
            <person name="Teague B."/>
            <person name="Potamousis K."/>
            <person name="Churas C."/>
            <person name="Place M."/>
            <person name="Herschleb J."/>
            <person name="Runnheim R."/>
            <person name="Forrest D."/>
            <person name="Amos-Landgraf J."/>
            <person name="Schwartz D.C."/>
            <person name="Cheng Z."/>
            <person name="Lindblad-Toh K."/>
            <person name="Eichler E.E."/>
            <person name="Ponting C.P."/>
        </authorList>
    </citation>
    <scope>NUCLEOTIDE SEQUENCE [LARGE SCALE GENOMIC DNA]</scope>
    <source>
        <strain>C57BL/6J</strain>
    </source>
</reference>
<reference key="2">
    <citation type="submission" date="1999-03" db="EMBL/GenBank/DDBJ databases">
        <title>The WashU-NCI mouse EST project 1999.</title>
        <authorList>
            <person name="Marra M."/>
            <person name="Hillier L."/>
            <person name="Kucaba T."/>
            <person name="Martin J."/>
            <person name="Beck C."/>
            <person name="Wylie T."/>
            <person name="Underwood K."/>
            <person name="Steptoe M."/>
            <person name="Theising B."/>
            <person name="Allen M."/>
            <person name="Bowers Y."/>
            <person name="Person B."/>
            <person name="Swaller T."/>
            <person name="Gibbons M."/>
            <person name="Pape D."/>
            <person name="Harvey N."/>
            <person name="Schurk R."/>
            <person name="Ritter E."/>
            <person name="Kohn S."/>
            <person name="Shin T."/>
            <person name="Jackson Y."/>
            <person name="Cardenas M."/>
            <person name="McCann R."/>
            <person name="Waterston R."/>
            <person name="Wilson R."/>
        </authorList>
    </citation>
    <scope>NUCLEOTIDE SEQUENCE [MRNA] OF 19-152</scope>
    <source>
        <strain>CD-1</strain>
        <tissue>Spermatid</tissue>
    </source>
</reference>
<reference key="3">
    <citation type="journal article" date="2020" name="Elife">
        <title>TMEM95 is a sperm membrane protein essential for mammalian fertilization.</title>
        <authorList>
            <person name="Lamas-Toranzo I."/>
            <person name="Hamze J.G."/>
            <person name="Bianchi E."/>
            <person name="Fernandez-Fuertes B."/>
            <person name="Perez-Cerezales S."/>
            <person name="Laguna-Barraza R."/>
            <person name="Fernandez-Gonzalez R."/>
            <person name="Lonergan P."/>
            <person name="Gutierrez-Adan A."/>
            <person name="Wright G.J."/>
            <person name="Jimenez-Movilla M."/>
            <person name="Bermejo-Alvarez P."/>
        </authorList>
    </citation>
    <scope>FUNCTION</scope>
    <scope>LACK OF INTERACTION WITH IZUMO1 AND IZUMO1R</scope>
    <scope>SUBCELLULAR LOCATION</scope>
    <scope>DISRUPTION PHENOTYPE</scope>
    <scope>IDENTIFICATION BY MASS SPECTROMETRY</scope>
</reference>
<reference key="4">
    <citation type="journal article" date="2020" name="Proc. Natl. Acad. Sci. U.S.A.">
        <title>Sperm proteins SOF1, TMEM95, and SPACA6 are required for sperm-oocyte fusion in mice.</title>
        <authorList>
            <person name="Noda T."/>
            <person name="Lu Y."/>
            <person name="Fujihara Y."/>
            <person name="Oura S."/>
            <person name="Koyano T."/>
            <person name="Kobayashi S."/>
            <person name="Matzuk M.M."/>
            <person name="Ikawa M."/>
        </authorList>
    </citation>
    <scope>FUNCTION</scope>
    <scope>TISSUE SPECIFICITY</scope>
    <scope>DEVELOPMENTAL STAGE</scope>
    <scope>DISRUPTION PHENOTYPE</scope>
</reference>
<reference key="5">
    <citation type="journal article" date="2022" name="Biol. Reprod.">
        <title>Deletion of the initial methionine codon of the Tmem95 gene causes subfertility, but not complete infertility, in male mice.</title>
        <authorList>
            <person name="Inoue N."/>
            <person name="Wada I."/>
        </authorList>
    </citation>
    <scope>FUNCTION</scope>
    <scope>DISRUPTION PHENOTYPE</scope>
</reference>
<comment type="function">
    <text evidence="3 4 5">Sperm protein required for fusion of sperm with the egg membrane during fertilization.</text>
</comment>
<comment type="subunit">
    <text evidence="4">Does not interact with sperm-egg fusion proteins IZUMO1 or IZUMO1R/JUNO.</text>
</comment>
<comment type="subcellular location">
    <subcellularLocation>
        <location evidence="4">Cytoplasmic vesicle</location>
        <location evidence="4">Secretory vesicle</location>
        <location evidence="4">Acrosome membrane</location>
        <topology evidence="6">Single-pass type I membrane protein</topology>
    </subcellularLocation>
    <text evidence="4">Following the acrosome reaction, relocalizes to the equatorial segment.</text>
</comment>
<comment type="tissue specificity">
    <text evidence="3">Expressed exclusively in testis.</text>
</comment>
<comment type="developmental stage">
    <text evidence="3">Expression is first detected at postnatal day 21.</text>
</comment>
<comment type="PTM">
    <text evidence="1">N-glycosylated.</text>
</comment>
<comment type="disruption phenotype">
    <text evidence="3 4 5">Males are healthy, grossly normal and exhibit normal mating behavior but are infertile (PubMed:32393636, PubMed:32484434). Sperm are morphologically normal, exhibit normal motility and can penetrate the zona pellucida and bind to the oolemma but are unable to fuse with the egg membrane or penetrate into the ooplasm (PubMed:32393636, PubMed:32484434). No effect on location of sperm-egg fusion protein IZUMO1 (PubMed:32393636). Almost all Tmem95-deficient spermatozoa are unable to fuse with oocytes; however, a small but significant population is unexpectedly able to fuse with oocytes (PubMed:34982145).</text>
</comment>
<comment type="similarity">
    <text evidence="6">Belongs to the TMEM95 family.</text>
</comment>
<protein>
    <recommendedName>
        <fullName evidence="6">Sperm-egg fusion protein TMEM95</fullName>
    </recommendedName>
    <alternativeName>
        <fullName evidence="7">Transmembrane protein 95</fullName>
    </alternativeName>
</protein>
<organism>
    <name type="scientific">Mus musculus</name>
    <name type="common">Mouse</name>
    <dbReference type="NCBI Taxonomy" id="10090"/>
    <lineage>
        <taxon>Eukaryota</taxon>
        <taxon>Metazoa</taxon>
        <taxon>Chordata</taxon>
        <taxon>Craniata</taxon>
        <taxon>Vertebrata</taxon>
        <taxon>Euteleostomi</taxon>
        <taxon>Mammalia</taxon>
        <taxon>Eutheria</taxon>
        <taxon>Euarchontoglires</taxon>
        <taxon>Glires</taxon>
        <taxon>Rodentia</taxon>
        <taxon>Myomorpha</taxon>
        <taxon>Muroidea</taxon>
        <taxon>Muridae</taxon>
        <taxon>Murinae</taxon>
        <taxon>Mus</taxon>
        <taxon>Mus</taxon>
    </lineage>
</organism>
<accession>P0DJF3</accession>
<dbReference type="EMBL" id="AL845465">
    <property type="status" value="NOT_ANNOTATED_CDS"/>
    <property type="molecule type" value="Genomic_DNA"/>
</dbReference>
<dbReference type="EMBL" id="BF018485">
    <property type="status" value="NOT_ANNOTATED_CDS"/>
    <property type="molecule type" value="mRNA"/>
</dbReference>
<dbReference type="CCDS" id="CCDS56783.1"/>
<dbReference type="RefSeq" id="NP_001182639.1">
    <property type="nucleotide sequence ID" value="NM_001195710.2"/>
</dbReference>
<dbReference type="SMR" id="P0DJF3"/>
<dbReference type="FunCoup" id="P0DJF3">
    <property type="interactions" value="17"/>
</dbReference>
<dbReference type="STRING" id="10090.ENSMUSP00000137492"/>
<dbReference type="GlyCosmos" id="P0DJF3">
    <property type="glycosylation" value="2 sites, No reported glycans"/>
</dbReference>
<dbReference type="GlyGen" id="P0DJF3">
    <property type="glycosylation" value="2 sites"/>
</dbReference>
<dbReference type="PhosphoSitePlus" id="P0DJF3"/>
<dbReference type="PaxDb" id="10090-ENSMUSP00000137492"/>
<dbReference type="Antibodypedia" id="76550">
    <property type="antibodies" value="25 antibodies from 5 providers"/>
</dbReference>
<dbReference type="Ensembl" id="ENSMUST00000178597.3">
    <property type="protein sequence ID" value="ENSMUSP00000137492.2"/>
    <property type="gene ID" value="ENSMUSG00000094845.3"/>
</dbReference>
<dbReference type="GeneID" id="100503361"/>
<dbReference type="KEGG" id="mmu:100503361"/>
<dbReference type="UCSC" id="uc011xxc.1">
    <property type="organism name" value="mouse"/>
</dbReference>
<dbReference type="AGR" id="MGI:3779488"/>
<dbReference type="CTD" id="339168"/>
<dbReference type="MGI" id="MGI:3779488">
    <property type="gene designation" value="Tmem95"/>
</dbReference>
<dbReference type="VEuPathDB" id="HostDB:ENSMUSG00000094845"/>
<dbReference type="eggNOG" id="ENOG502S64R">
    <property type="taxonomic scope" value="Eukaryota"/>
</dbReference>
<dbReference type="GeneTree" id="ENSGT00390000018162"/>
<dbReference type="HOGENOM" id="CLU_130463_0_0_1"/>
<dbReference type="InParanoid" id="P0DJF3"/>
<dbReference type="OMA" id="STCEGTE"/>
<dbReference type="OrthoDB" id="9936222at2759"/>
<dbReference type="TreeFam" id="TF342122"/>
<dbReference type="BioGRID-ORCS" id="100503361">
    <property type="hits" value="1 hit in 76 CRISPR screens"/>
</dbReference>
<dbReference type="PRO" id="PR:P0DJF3"/>
<dbReference type="Proteomes" id="UP000000589">
    <property type="component" value="Chromosome 11"/>
</dbReference>
<dbReference type="RNAct" id="P0DJF3">
    <property type="molecule type" value="protein"/>
</dbReference>
<dbReference type="Bgee" id="ENSMUSG00000094845">
    <property type="expression patterns" value="Expressed in testis and 36 other cell types or tissues"/>
</dbReference>
<dbReference type="GO" id="GO:0002080">
    <property type="term" value="C:acrosomal membrane"/>
    <property type="evidence" value="ECO:0000314"/>
    <property type="project" value="UniProtKB"/>
</dbReference>
<dbReference type="GO" id="GO:0097524">
    <property type="term" value="C:sperm plasma membrane"/>
    <property type="evidence" value="ECO:0007669"/>
    <property type="project" value="InterPro"/>
</dbReference>
<dbReference type="GO" id="GO:0007342">
    <property type="term" value="P:fusion of sperm to egg plasma membrane involved in single fertilization"/>
    <property type="evidence" value="ECO:0000315"/>
    <property type="project" value="UniProtKB"/>
</dbReference>
<dbReference type="InterPro" id="IPR027984">
    <property type="entry name" value="TMEM95"/>
</dbReference>
<dbReference type="PANTHER" id="PTHR38808:SF1">
    <property type="entry name" value="SPERM-EGG FUSION PROTEIN TMEM95"/>
    <property type="match status" value="1"/>
</dbReference>
<dbReference type="PANTHER" id="PTHR38808">
    <property type="entry name" value="TRANSMEMBRANE PROTEIN 95"/>
    <property type="match status" value="1"/>
</dbReference>
<dbReference type="Pfam" id="PF15203">
    <property type="entry name" value="TMEM95"/>
    <property type="match status" value="1"/>
</dbReference>
<name>TMM95_MOUSE</name>
<feature type="signal peptide" evidence="2">
    <location>
        <begin position="1"/>
        <end position="16"/>
    </location>
</feature>
<feature type="chain" id="PRO_0000416121" description="Sperm-egg fusion protein TMEM95">
    <location>
        <begin position="17"/>
        <end position="176"/>
    </location>
</feature>
<feature type="topological domain" description="Extracellular" evidence="2">
    <location>
        <begin position="17"/>
        <end position="146"/>
    </location>
</feature>
<feature type="transmembrane region" description="Helical" evidence="2">
    <location>
        <begin position="147"/>
        <end position="167"/>
    </location>
</feature>
<feature type="topological domain" description="Cytoplasmic" evidence="2">
    <location>
        <begin position="168"/>
        <end position="176"/>
    </location>
</feature>
<feature type="glycosylation site" description="N-linked (GlcNAc...) asparagine" evidence="2">
    <location>
        <position position="36"/>
    </location>
</feature>
<feature type="glycosylation site" description="N-linked (GlcNAc...) asparagine" evidence="2">
    <location>
        <position position="118"/>
    </location>
</feature>
<feature type="disulfide bond" evidence="1">
    <location>
        <begin position="17"/>
        <end position="119"/>
    </location>
</feature>
<feature type="disulfide bond" evidence="1">
    <location>
        <begin position="20"/>
        <end position="122"/>
    </location>
</feature>
<feature type="disulfide bond" evidence="1">
    <location>
        <begin position="106"/>
        <end position="129"/>
    </location>
</feature>
<feature type="disulfide bond" evidence="1">
    <location>
        <begin position="110"/>
        <end position="135"/>
    </location>
</feature>
<gene>
    <name evidence="7" type="primary">Tmem95</name>
</gene>